<feature type="chain" id="PRO_0000068116" description="Glucose-6-phosphate 1-dehydrogenase">
    <location>
        <begin position="1"/>
        <end position="512"/>
    </location>
</feature>
<feature type="region of interest" description="Disordered" evidence="2">
    <location>
        <begin position="479"/>
        <end position="512"/>
    </location>
</feature>
<feature type="compositionally biased region" description="Basic and acidic residues" evidence="2">
    <location>
        <begin position="496"/>
        <end position="512"/>
    </location>
</feature>
<feature type="active site" description="Proton acceptor" evidence="1">
    <location>
        <position position="263"/>
    </location>
</feature>
<feature type="binding site" evidence="1">
    <location>
        <position position="61"/>
    </location>
    <ligand>
        <name>NADP(+)</name>
        <dbReference type="ChEBI" id="CHEBI:58349"/>
    </ligand>
</feature>
<feature type="binding site" evidence="1">
    <location>
        <begin position="103"/>
        <end position="104"/>
    </location>
    <ligand>
        <name>NADP(+)</name>
        <dbReference type="ChEBI" id="CHEBI:58349"/>
    </ligand>
</feature>
<feature type="binding site" evidence="1">
    <location>
        <position position="171"/>
    </location>
    <ligand>
        <name>NADP(+)</name>
        <dbReference type="ChEBI" id="CHEBI:58349"/>
    </ligand>
</feature>
<feature type="binding site" evidence="1">
    <location>
        <position position="201"/>
    </location>
    <ligand>
        <name>substrate</name>
    </ligand>
</feature>
<feature type="binding site" evidence="1">
    <location>
        <position position="205"/>
    </location>
    <ligand>
        <name>substrate</name>
    </ligand>
</feature>
<feature type="binding site" evidence="1">
    <location>
        <position position="239"/>
    </location>
    <ligand>
        <name>substrate</name>
    </ligand>
</feature>
<feature type="binding site" evidence="1">
    <location>
        <position position="258"/>
    </location>
    <ligand>
        <name>substrate</name>
    </ligand>
</feature>
<feature type="binding site" evidence="1">
    <location>
        <position position="360"/>
    </location>
    <ligand>
        <name>substrate</name>
    </ligand>
</feature>
<feature type="binding site" evidence="1">
    <location>
        <position position="365"/>
    </location>
    <ligand>
        <name>substrate</name>
    </ligand>
</feature>
<dbReference type="EC" id="1.1.1.49" evidence="1"/>
<dbReference type="EMBL" id="AE001363">
    <property type="protein sequence ID" value="AAD18391.1"/>
    <property type="molecule type" value="Genomic_DNA"/>
</dbReference>
<dbReference type="EMBL" id="AE002161">
    <property type="protein sequence ID" value="AAF73682.1"/>
    <property type="molecule type" value="Genomic_DNA"/>
</dbReference>
<dbReference type="EMBL" id="BA000008">
    <property type="protein sequence ID" value="BAA98448.1"/>
    <property type="molecule type" value="Genomic_DNA"/>
</dbReference>
<dbReference type="EMBL" id="AE009440">
    <property type="protein sequence ID" value="AAP98177.1"/>
    <property type="molecule type" value="Genomic_DNA"/>
</dbReference>
<dbReference type="PIR" id="C72103">
    <property type="entry name" value="C72103"/>
</dbReference>
<dbReference type="PIR" id="F86520">
    <property type="entry name" value="F86520"/>
</dbReference>
<dbReference type="RefSeq" id="NP_224447.1">
    <property type="nucleotide sequence ID" value="NC_000922.1"/>
</dbReference>
<dbReference type="RefSeq" id="WP_010882890.1">
    <property type="nucleotide sequence ID" value="NZ_LN847257.1"/>
</dbReference>
<dbReference type="SMR" id="Q9Z8U6"/>
<dbReference type="STRING" id="406984.CPK_ORF00747"/>
<dbReference type="GeneID" id="45050285"/>
<dbReference type="KEGG" id="cpa:CP_0524"/>
<dbReference type="KEGG" id="cpj:zwf"/>
<dbReference type="KEGG" id="cpn:CPn_0238"/>
<dbReference type="KEGG" id="cpt:CpB0244"/>
<dbReference type="PATRIC" id="fig|115713.3.peg.268"/>
<dbReference type="eggNOG" id="COG0364">
    <property type="taxonomic scope" value="Bacteria"/>
</dbReference>
<dbReference type="HOGENOM" id="CLU_013524_5_0_0"/>
<dbReference type="OrthoDB" id="9802739at2"/>
<dbReference type="UniPathway" id="UPA00115">
    <property type="reaction ID" value="UER00408"/>
</dbReference>
<dbReference type="Proteomes" id="UP000000583">
    <property type="component" value="Chromosome"/>
</dbReference>
<dbReference type="Proteomes" id="UP000000801">
    <property type="component" value="Chromosome"/>
</dbReference>
<dbReference type="GO" id="GO:0005829">
    <property type="term" value="C:cytosol"/>
    <property type="evidence" value="ECO:0007669"/>
    <property type="project" value="TreeGrafter"/>
</dbReference>
<dbReference type="GO" id="GO:0004345">
    <property type="term" value="F:glucose-6-phosphate dehydrogenase activity"/>
    <property type="evidence" value="ECO:0007669"/>
    <property type="project" value="UniProtKB-UniRule"/>
</dbReference>
<dbReference type="GO" id="GO:0050661">
    <property type="term" value="F:NADP binding"/>
    <property type="evidence" value="ECO:0007669"/>
    <property type="project" value="UniProtKB-UniRule"/>
</dbReference>
<dbReference type="GO" id="GO:0006006">
    <property type="term" value="P:glucose metabolic process"/>
    <property type="evidence" value="ECO:0007669"/>
    <property type="project" value="UniProtKB-KW"/>
</dbReference>
<dbReference type="GO" id="GO:0009051">
    <property type="term" value="P:pentose-phosphate shunt, oxidative branch"/>
    <property type="evidence" value="ECO:0007669"/>
    <property type="project" value="TreeGrafter"/>
</dbReference>
<dbReference type="Gene3D" id="3.30.360.10">
    <property type="entry name" value="Dihydrodipicolinate Reductase, domain 2"/>
    <property type="match status" value="1"/>
</dbReference>
<dbReference type="Gene3D" id="3.40.50.720">
    <property type="entry name" value="NAD(P)-binding Rossmann-like Domain"/>
    <property type="match status" value="1"/>
</dbReference>
<dbReference type="HAMAP" id="MF_00966">
    <property type="entry name" value="G6PD"/>
    <property type="match status" value="1"/>
</dbReference>
<dbReference type="InterPro" id="IPR001282">
    <property type="entry name" value="G6P_DH"/>
</dbReference>
<dbReference type="InterPro" id="IPR019796">
    <property type="entry name" value="G6P_DH_AS"/>
</dbReference>
<dbReference type="InterPro" id="IPR022675">
    <property type="entry name" value="G6P_DH_C"/>
</dbReference>
<dbReference type="InterPro" id="IPR022674">
    <property type="entry name" value="G6P_DH_NAD-bd"/>
</dbReference>
<dbReference type="InterPro" id="IPR036291">
    <property type="entry name" value="NAD(P)-bd_dom_sf"/>
</dbReference>
<dbReference type="NCBIfam" id="TIGR00871">
    <property type="entry name" value="zwf"/>
    <property type="match status" value="1"/>
</dbReference>
<dbReference type="PANTHER" id="PTHR23429:SF0">
    <property type="entry name" value="GLUCOSE-6-PHOSPHATE 1-DEHYDROGENASE"/>
    <property type="match status" value="1"/>
</dbReference>
<dbReference type="PANTHER" id="PTHR23429">
    <property type="entry name" value="GLUCOSE-6-PHOSPHATE 1-DEHYDROGENASE G6PD"/>
    <property type="match status" value="1"/>
</dbReference>
<dbReference type="Pfam" id="PF02781">
    <property type="entry name" value="G6PD_C"/>
    <property type="match status" value="1"/>
</dbReference>
<dbReference type="Pfam" id="PF00479">
    <property type="entry name" value="G6PD_N"/>
    <property type="match status" value="1"/>
</dbReference>
<dbReference type="PIRSF" id="PIRSF000110">
    <property type="entry name" value="G6PD"/>
    <property type="match status" value="1"/>
</dbReference>
<dbReference type="PRINTS" id="PR00079">
    <property type="entry name" value="G6PDHDRGNASE"/>
</dbReference>
<dbReference type="SUPFAM" id="SSF55347">
    <property type="entry name" value="Glyceraldehyde-3-phosphate dehydrogenase-like, C-terminal domain"/>
    <property type="match status" value="1"/>
</dbReference>
<dbReference type="SUPFAM" id="SSF51735">
    <property type="entry name" value="NAD(P)-binding Rossmann-fold domains"/>
    <property type="match status" value="1"/>
</dbReference>
<dbReference type="PROSITE" id="PS00069">
    <property type="entry name" value="G6P_DEHYDROGENASE"/>
    <property type="match status" value="1"/>
</dbReference>
<keyword id="KW-0119">Carbohydrate metabolism</keyword>
<keyword id="KW-0313">Glucose metabolism</keyword>
<keyword id="KW-0521">NADP</keyword>
<keyword id="KW-0560">Oxidoreductase</keyword>
<protein>
    <recommendedName>
        <fullName evidence="1">Glucose-6-phosphate 1-dehydrogenase</fullName>
        <shortName evidence="1">G6PD</shortName>
        <ecNumber evidence="1">1.1.1.49</ecNumber>
    </recommendedName>
</protein>
<comment type="function">
    <text evidence="1">Catalyzes the oxidation of glucose 6-phosphate to 6-phosphogluconolactone.</text>
</comment>
<comment type="catalytic activity">
    <reaction evidence="1">
        <text>D-glucose 6-phosphate + NADP(+) = 6-phospho-D-glucono-1,5-lactone + NADPH + H(+)</text>
        <dbReference type="Rhea" id="RHEA:15841"/>
        <dbReference type="ChEBI" id="CHEBI:15378"/>
        <dbReference type="ChEBI" id="CHEBI:57783"/>
        <dbReference type="ChEBI" id="CHEBI:57955"/>
        <dbReference type="ChEBI" id="CHEBI:58349"/>
        <dbReference type="ChEBI" id="CHEBI:61548"/>
        <dbReference type="EC" id="1.1.1.49"/>
    </reaction>
</comment>
<comment type="pathway">
    <text evidence="1">Carbohydrate degradation; pentose phosphate pathway; D-ribulose 5-phosphate from D-glucose 6-phosphate (oxidative stage): step 1/3.</text>
</comment>
<comment type="similarity">
    <text evidence="1">Belongs to the glucose-6-phosphate dehydrogenase family.</text>
</comment>
<proteinExistence type="inferred from homology"/>
<evidence type="ECO:0000255" key="1">
    <source>
        <dbReference type="HAMAP-Rule" id="MF_00966"/>
    </source>
</evidence>
<evidence type="ECO:0000256" key="2">
    <source>
        <dbReference type="SAM" id="MobiDB-lite"/>
    </source>
</evidence>
<name>G6PD_CHLPN</name>
<sequence length="512" mass="58740">MTNVVQETIGGLNSPRTCPPCILVIFGATGDLTARKLLPALYHLTKEGRLSDQFVCVGFARREKSNELFRQEMKQAVIQFSPSELDIKVWEDFQQRLFYHRSEFDNNMGYTSLKDSLEDLDKTYGTRGNRLFYLSTPPQYFSRIIENLNKHKLFYKNQDQGKPWSRVIIEKPFGRDLDSAKQLQQCINENLNENSVYHIDHYLGKETVQNILTTRFANTIFESCWNSQYIDHVQISLSETIGIGSRGNFFEKSGMLRDMVQNHMMQLLCLLTMEPPTTFDADEIRKEKIKILQRISPFSEGSSIVRGQYGPGTVQGVSVLGYREEENVDKDSRVETYVALKTVINNPRWLGVPFYLRAGKRLAKKSTDISIIFKKSPYNLFAAEECSRCPIENDLLIIRIQPDEGVALKFNCKVPGTNNIVRPVKMDFRYDSYFQTTTPEAYERLLCDCIIGDRTLFTGGDEVMASWKLFTPVLEEWDQDSSPSFPNYPAGSSGPKEADALIERDGRSWRPL</sequence>
<accession>Q9Z8U6</accession>
<accession>Q9JQ22</accession>
<organism>
    <name type="scientific">Chlamydia pneumoniae</name>
    <name type="common">Chlamydophila pneumoniae</name>
    <dbReference type="NCBI Taxonomy" id="83558"/>
    <lineage>
        <taxon>Bacteria</taxon>
        <taxon>Pseudomonadati</taxon>
        <taxon>Chlamydiota</taxon>
        <taxon>Chlamydiia</taxon>
        <taxon>Chlamydiales</taxon>
        <taxon>Chlamydiaceae</taxon>
        <taxon>Chlamydia/Chlamydophila group</taxon>
        <taxon>Chlamydia</taxon>
    </lineage>
</organism>
<gene>
    <name evidence="1" type="primary">zwf</name>
    <name type="ordered locus">CPn_0238</name>
    <name type="ordered locus">CP_0524</name>
    <name type="ordered locus">CPj0238</name>
    <name type="ordered locus">CpB0244</name>
</gene>
<reference key="1">
    <citation type="journal article" date="1999" name="Nat. Genet.">
        <title>Comparative genomes of Chlamydia pneumoniae and C. trachomatis.</title>
        <authorList>
            <person name="Kalman S."/>
            <person name="Mitchell W.P."/>
            <person name="Marathe R."/>
            <person name="Lammel C.J."/>
            <person name="Fan J."/>
            <person name="Hyman R.W."/>
            <person name="Olinger L."/>
            <person name="Grimwood J."/>
            <person name="Davis R.W."/>
            <person name="Stephens R.S."/>
        </authorList>
    </citation>
    <scope>NUCLEOTIDE SEQUENCE [LARGE SCALE GENOMIC DNA]</scope>
    <source>
        <strain>CWL029</strain>
    </source>
</reference>
<reference key="2">
    <citation type="journal article" date="2000" name="Nucleic Acids Res.">
        <title>Genome sequences of Chlamydia trachomatis MoPn and Chlamydia pneumoniae AR39.</title>
        <authorList>
            <person name="Read T.D."/>
            <person name="Brunham R.C."/>
            <person name="Shen C."/>
            <person name="Gill S.R."/>
            <person name="Heidelberg J.F."/>
            <person name="White O."/>
            <person name="Hickey E.K."/>
            <person name="Peterson J.D."/>
            <person name="Utterback T.R."/>
            <person name="Berry K.J."/>
            <person name="Bass S."/>
            <person name="Linher K.D."/>
            <person name="Weidman J.F."/>
            <person name="Khouri H.M."/>
            <person name="Craven B."/>
            <person name="Bowman C."/>
            <person name="Dodson R.J."/>
            <person name="Gwinn M.L."/>
            <person name="Nelson W.C."/>
            <person name="DeBoy R.T."/>
            <person name="Kolonay J.F."/>
            <person name="McClarty G."/>
            <person name="Salzberg S.L."/>
            <person name="Eisen J.A."/>
            <person name="Fraser C.M."/>
        </authorList>
    </citation>
    <scope>NUCLEOTIDE SEQUENCE [LARGE SCALE GENOMIC DNA]</scope>
    <source>
        <strain>AR39</strain>
    </source>
</reference>
<reference key="3">
    <citation type="journal article" date="2000" name="Nucleic Acids Res.">
        <title>Comparison of whole genome sequences of Chlamydia pneumoniae J138 from Japan and CWL029 from USA.</title>
        <authorList>
            <person name="Shirai M."/>
            <person name="Hirakawa H."/>
            <person name="Kimoto M."/>
            <person name="Tabuchi M."/>
            <person name="Kishi F."/>
            <person name="Ouchi K."/>
            <person name="Shiba T."/>
            <person name="Ishii K."/>
            <person name="Hattori M."/>
            <person name="Kuhara S."/>
            <person name="Nakazawa T."/>
        </authorList>
    </citation>
    <scope>NUCLEOTIDE SEQUENCE [LARGE SCALE GENOMIC DNA]</scope>
    <source>
        <strain>J138</strain>
    </source>
</reference>
<reference key="4">
    <citation type="submission" date="2002-05" db="EMBL/GenBank/DDBJ databases">
        <title>The genome sequence of Chlamydia pneumoniae TW183 and comparison with other Chlamydia strains based on whole genome sequence analysis.</title>
        <authorList>
            <person name="Geng M.M."/>
            <person name="Schuhmacher A."/>
            <person name="Muehldorfer I."/>
            <person name="Bensch K.W."/>
            <person name="Schaefer K.P."/>
            <person name="Schneider S."/>
            <person name="Pohl T."/>
            <person name="Essig A."/>
            <person name="Marre R."/>
            <person name="Melchers K."/>
        </authorList>
    </citation>
    <scope>NUCLEOTIDE SEQUENCE [LARGE SCALE GENOMIC DNA]</scope>
    <source>
        <strain>TW-183</strain>
    </source>
</reference>